<organism>
    <name type="scientific">Rippkaea orientalis (strain PCC 8801 / RF-1)</name>
    <name type="common">Cyanothece sp. (strain PCC 8801)</name>
    <dbReference type="NCBI Taxonomy" id="41431"/>
    <lineage>
        <taxon>Bacteria</taxon>
        <taxon>Bacillati</taxon>
        <taxon>Cyanobacteriota</taxon>
        <taxon>Cyanophyceae</taxon>
        <taxon>Oscillatoriophycideae</taxon>
        <taxon>Chroococcales</taxon>
        <taxon>Aphanothecaceae</taxon>
        <taxon>Rippkaea</taxon>
        <taxon>Rippkaea orientalis</taxon>
    </lineage>
</organism>
<sequence>MVQAPLSPSLLQTQSISQPPQETEALKAWLEELTQKIIEGDRINKSEALTLTQIEGQDSILLLCEAADRIRQACCGNVVDLCSIINIKSGNCSENCRFCSQSVYHPGENSPIYGLKSSEEILAQAKAAEAAGAKRFCLVSQGRGPKYQGAKSKEFEQILATVRQIAAETSIKPCCALGEVTPEQAQALREAGVTRYNHNLEASEGFYPEIVTSHSWRDRVETIKNLKAAGIQACSGGIMGMGETWEDRVDLALALRELGVESVPINLLNPREGTPLGDCHRLDPFEALKAIAIFRLILPQQILRYAGGREAIMGDLQSLGLKSGINAMLIGHYLTTLGQPPEKDLAMVESLGLQGGEAPIPGEYQTRS</sequence>
<gene>
    <name evidence="1" type="primary">bioB</name>
    <name type="ordered locus">PCC8801_0144</name>
</gene>
<name>BIOB_RIPO1</name>
<feature type="chain" id="PRO_0000381340" description="Biotin synthase">
    <location>
        <begin position="1"/>
        <end position="368"/>
    </location>
</feature>
<feature type="domain" description="Radical SAM core" evidence="2">
    <location>
        <begin position="74"/>
        <end position="309"/>
    </location>
</feature>
<feature type="binding site" evidence="1">
    <location>
        <position position="92"/>
    </location>
    <ligand>
        <name>[4Fe-4S] cluster</name>
        <dbReference type="ChEBI" id="CHEBI:49883"/>
        <note>4Fe-4S-S-AdoMet</note>
    </ligand>
</feature>
<feature type="binding site" evidence="1">
    <location>
        <position position="96"/>
    </location>
    <ligand>
        <name>[4Fe-4S] cluster</name>
        <dbReference type="ChEBI" id="CHEBI:49883"/>
        <note>4Fe-4S-S-AdoMet</note>
    </ligand>
</feature>
<feature type="binding site" evidence="1">
    <location>
        <position position="99"/>
    </location>
    <ligand>
        <name>[4Fe-4S] cluster</name>
        <dbReference type="ChEBI" id="CHEBI:49883"/>
        <note>4Fe-4S-S-AdoMet</note>
    </ligand>
</feature>
<feature type="binding site" evidence="1">
    <location>
        <position position="137"/>
    </location>
    <ligand>
        <name>[2Fe-2S] cluster</name>
        <dbReference type="ChEBI" id="CHEBI:190135"/>
    </ligand>
</feature>
<feature type="binding site" evidence="1">
    <location>
        <position position="174"/>
    </location>
    <ligand>
        <name>[2Fe-2S] cluster</name>
        <dbReference type="ChEBI" id="CHEBI:190135"/>
    </ligand>
</feature>
<feature type="binding site" evidence="1">
    <location>
        <position position="234"/>
    </location>
    <ligand>
        <name>[2Fe-2S] cluster</name>
        <dbReference type="ChEBI" id="CHEBI:190135"/>
    </ligand>
</feature>
<feature type="binding site" evidence="1">
    <location>
        <position position="304"/>
    </location>
    <ligand>
        <name>[2Fe-2S] cluster</name>
        <dbReference type="ChEBI" id="CHEBI:190135"/>
    </ligand>
</feature>
<comment type="function">
    <text evidence="1">Catalyzes the conversion of dethiobiotin (DTB) to biotin by the insertion of a sulfur atom into dethiobiotin via a radical-based mechanism.</text>
</comment>
<comment type="catalytic activity">
    <reaction evidence="1">
        <text>(4R,5S)-dethiobiotin + (sulfur carrier)-SH + 2 reduced [2Fe-2S]-[ferredoxin] + 2 S-adenosyl-L-methionine = (sulfur carrier)-H + biotin + 2 5'-deoxyadenosine + 2 L-methionine + 2 oxidized [2Fe-2S]-[ferredoxin]</text>
        <dbReference type="Rhea" id="RHEA:22060"/>
        <dbReference type="Rhea" id="RHEA-COMP:10000"/>
        <dbReference type="Rhea" id="RHEA-COMP:10001"/>
        <dbReference type="Rhea" id="RHEA-COMP:14737"/>
        <dbReference type="Rhea" id="RHEA-COMP:14739"/>
        <dbReference type="ChEBI" id="CHEBI:17319"/>
        <dbReference type="ChEBI" id="CHEBI:29917"/>
        <dbReference type="ChEBI" id="CHEBI:33737"/>
        <dbReference type="ChEBI" id="CHEBI:33738"/>
        <dbReference type="ChEBI" id="CHEBI:57586"/>
        <dbReference type="ChEBI" id="CHEBI:57844"/>
        <dbReference type="ChEBI" id="CHEBI:59789"/>
        <dbReference type="ChEBI" id="CHEBI:64428"/>
        <dbReference type="ChEBI" id="CHEBI:149473"/>
        <dbReference type="EC" id="2.8.1.6"/>
    </reaction>
</comment>
<comment type="cofactor">
    <cofactor evidence="1">
        <name>[4Fe-4S] cluster</name>
        <dbReference type="ChEBI" id="CHEBI:49883"/>
    </cofactor>
    <text evidence="1">Binds 1 [4Fe-4S] cluster. The cluster is coordinated with 3 cysteines and an exchangeable S-adenosyl-L-methionine.</text>
</comment>
<comment type="cofactor">
    <cofactor evidence="1">
        <name>[2Fe-2S] cluster</name>
        <dbReference type="ChEBI" id="CHEBI:190135"/>
    </cofactor>
    <text evidence="1">Binds 1 [2Fe-2S] cluster. The cluster is coordinated with 3 cysteines and 1 arginine.</text>
</comment>
<comment type="pathway">
    <text evidence="1">Cofactor biosynthesis; biotin biosynthesis; biotin from 7,8-diaminononanoate: step 2/2.</text>
</comment>
<comment type="subunit">
    <text evidence="1">Homodimer.</text>
</comment>
<comment type="similarity">
    <text evidence="1">Belongs to the radical SAM superfamily. Biotin synthase family.</text>
</comment>
<reference key="1">
    <citation type="journal article" date="2011" name="MBio">
        <title>Novel metabolic attributes of the genus Cyanothece, comprising a group of unicellular nitrogen-fixing Cyanobacteria.</title>
        <authorList>
            <person name="Bandyopadhyay A."/>
            <person name="Elvitigala T."/>
            <person name="Welsh E."/>
            <person name="Stockel J."/>
            <person name="Liberton M."/>
            <person name="Min H."/>
            <person name="Sherman L.A."/>
            <person name="Pakrasi H.B."/>
        </authorList>
    </citation>
    <scope>NUCLEOTIDE SEQUENCE [LARGE SCALE GENOMIC DNA]</scope>
    <source>
        <strain>PCC 8801 / RF-1</strain>
    </source>
</reference>
<evidence type="ECO:0000255" key="1">
    <source>
        <dbReference type="HAMAP-Rule" id="MF_01694"/>
    </source>
</evidence>
<evidence type="ECO:0000255" key="2">
    <source>
        <dbReference type="PROSITE-ProRule" id="PRU01266"/>
    </source>
</evidence>
<protein>
    <recommendedName>
        <fullName evidence="1">Biotin synthase</fullName>
        <ecNumber evidence="1">2.8.1.6</ecNumber>
    </recommendedName>
</protein>
<keyword id="KW-0001">2Fe-2S</keyword>
<keyword id="KW-0004">4Fe-4S</keyword>
<keyword id="KW-0093">Biotin biosynthesis</keyword>
<keyword id="KW-0408">Iron</keyword>
<keyword id="KW-0411">Iron-sulfur</keyword>
<keyword id="KW-0479">Metal-binding</keyword>
<keyword id="KW-1185">Reference proteome</keyword>
<keyword id="KW-0949">S-adenosyl-L-methionine</keyword>
<keyword id="KW-0808">Transferase</keyword>
<proteinExistence type="inferred from homology"/>
<accession>B7K1U3</accession>
<dbReference type="EC" id="2.8.1.6" evidence="1"/>
<dbReference type="EMBL" id="CP001287">
    <property type="protein sequence ID" value="ACK64250.1"/>
    <property type="molecule type" value="Genomic_DNA"/>
</dbReference>
<dbReference type="RefSeq" id="WP_012593527.1">
    <property type="nucleotide sequence ID" value="NC_011726.1"/>
</dbReference>
<dbReference type="SMR" id="B7K1U3"/>
<dbReference type="STRING" id="41431.PCC8801_0144"/>
<dbReference type="KEGG" id="cyp:PCC8801_0144"/>
<dbReference type="eggNOG" id="COG0502">
    <property type="taxonomic scope" value="Bacteria"/>
</dbReference>
<dbReference type="HOGENOM" id="CLU_033172_2_1_3"/>
<dbReference type="OrthoDB" id="9786826at2"/>
<dbReference type="UniPathway" id="UPA00078">
    <property type="reaction ID" value="UER00162"/>
</dbReference>
<dbReference type="Proteomes" id="UP000008204">
    <property type="component" value="Chromosome"/>
</dbReference>
<dbReference type="GO" id="GO:0051537">
    <property type="term" value="F:2 iron, 2 sulfur cluster binding"/>
    <property type="evidence" value="ECO:0007669"/>
    <property type="project" value="UniProtKB-KW"/>
</dbReference>
<dbReference type="GO" id="GO:0051539">
    <property type="term" value="F:4 iron, 4 sulfur cluster binding"/>
    <property type="evidence" value="ECO:0007669"/>
    <property type="project" value="UniProtKB-KW"/>
</dbReference>
<dbReference type="GO" id="GO:0004076">
    <property type="term" value="F:biotin synthase activity"/>
    <property type="evidence" value="ECO:0007669"/>
    <property type="project" value="UniProtKB-UniRule"/>
</dbReference>
<dbReference type="GO" id="GO:0005506">
    <property type="term" value="F:iron ion binding"/>
    <property type="evidence" value="ECO:0007669"/>
    <property type="project" value="UniProtKB-UniRule"/>
</dbReference>
<dbReference type="GO" id="GO:0009102">
    <property type="term" value="P:biotin biosynthetic process"/>
    <property type="evidence" value="ECO:0007669"/>
    <property type="project" value="UniProtKB-UniRule"/>
</dbReference>
<dbReference type="CDD" id="cd01335">
    <property type="entry name" value="Radical_SAM"/>
    <property type="match status" value="1"/>
</dbReference>
<dbReference type="FunFam" id="3.20.20.70:FF:000026">
    <property type="entry name" value="Biotin synthase"/>
    <property type="match status" value="1"/>
</dbReference>
<dbReference type="Gene3D" id="3.20.20.70">
    <property type="entry name" value="Aldolase class I"/>
    <property type="match status" value="1"/>
</dbReference>
<dbReference type="HAMAP" id="MF_01694">
    <property type="entry name" value="BioB"/>
    <property type="match status" value="1"/>
</dbReference>
<dbReference type="InterPro" id="IPR013785">
    <property type="entry name" value="Aldolase_TIM"/>
</dbReference>
<dbReference type="InterPro" id="IPR010722">
    <property type="entry name" value="BATS_dom"/>
</dbReference>
<dbReference type="InterPro" id="IPR002684">
    <property type="entry name" value="Biotin_synth/BioAB"/>
</dbReference>
<dbReference type="InterPro" id="IPR024177">
    <property type="entry name" value="Biotin_synthase"/>
</dbReference>
<dbReference type="InterPro" id="IPR006638">
    <property type="entry name" value="Elp3/MiaA/NifB-like_rSAM"/>
</dbReference>
<dbReference type="InterPro" id="IPR007197">
    <property type="entry name" value="rSAM"/>
</dbReference>
<dbReference type="NCBIfam" id="TIGR00433">
    <property type="entry name" value="bioB"/>
    <property type="match status" value="1"/>
</dbReference>
<dbReference type="PANTHER" id="PTHR22976">
    <property type="entry name" value="BIOTIN SYNTHASE"/>
    <property type="match status" value="1"/>
</dbReference>
<dbReference type="PANTHER" id="PTHR22976:SF2">
    <property type="entry name" value="BIOTIN SYNTHASE, MITOCHONDRIAL"/>
    <property type="match status" value="1"/>
</dbReference>
<dbReference type="Pfam" id="PF06968">
    <property type="entry name" value="BATS"/>
    <property type="match status" value="1"/>
</dbReference>
<dbReference type="Pfam" id="PF04055">
    <property type="entry name" value="Radical_SAM"/>
    <property type="match status" value="1"/>
</dbReference>
<dbReference type="PIRSF" id="PIRSF001619">
    <property type="entry name" value="Biotin_synth"/>
    <property type="match status" value="1"/>
</dbReference>
<dbReference type="SFLD" id="SFLDG01278">
    <property type="entry name" value="biotin_synthase_like"/>
    <property type="match status" value="1"/>
</dbReference>
<dbReference type="SFLD" id="SFLDS00029">
    <property type="entry name" value="Radical_SAM"/>
    <property type="match status" value="1"/>
</dbReference>
<dbReference type="SMART" id="SM00876">
    <property type="entry name" value="BATS"/>
    <property type="match status" value="1"/>
</dbReference>
<dbReference type="SMART" id="SM00729">
    <property type="entry name" value="Elp3"/>
    <property type="match status" value="1"/>
</dbReference>
<dbReference type="SUPFAM" id="SSF102114">
    <property type="entry name" value="Radical SAM enzymes"/>
    <property type="match status" value="1"/>
</dbReference>
<dbReference type="PROSITE" id="PS51918">
    <property type="entry name" value="RADICAL_SAM"/>
    <property type="match status" value="1"/>
</dbReference>